<comment type="function">
    <text evidence="1">Catalyzes the conversion of glucosamine-6-phosphate to glucosamine-1-phosphate.</text>
</comment>
<comment type="catalytic activity">
    <reaction evidence="1">
        <text>alpha-D-glucosamine 1-phosphate = D-glucosamine 6-phosphate</text>
        <dbReference type="Rhea" id="RHEA:23424"/>
        <dbReference type="ChEBI" id="CHEBI:58516"/>
        <dbReference type="ChEBI" id="CHEBI:58725"/>
        <dbReference type="EC" id="5.4.2.10"/>
    </reaction>
</comment>
<comment type="cofactor">
    <cofactor evidence="1">
        <name>Mg(2+)</name>
        <dbReference type="ChEBI" id="CHEBI:18420"/>
    </cofactor>
    <text evidence="1">Binds 1 Mg(2+) ion per subunit.</text>
</comment>
<comment type="PTM">
    <text evidence="1">Activated by phosphorylation.</text>
</comment>
<comment type="similarity">
    <text evidence="1">Belongs to the phosphohexose mutase family.</text>
</comment>
<accession>C1B058</accession>
<evidence type="ECO:0000255" key="1">
    <source>
        <dbReference type="HAMAP-Rule" id="MF_01554"/>
    </source>
</evidence>
<keyword id="KW-0413">Isomerase</keyword>
<keyword id="KW-0460">Magnesium</keyword>
<keyword id="KW-0479">Metal-binding</keyword>
<keyword id="KW-0597">Phosphoprotein</keyword>
<dbReference type="EC" id="5.4.2.10" evidence="1"/>
<dbReference type="EMBL" id="AP011115">
    <property type="protein sequence ID" value="BAH54479.1"/>
    <property type="molecule type" value="Genomic_DNA"/>
</dbReference>
<dbReference type="RefSeq" id="WP_015889942.1">
    <property type="nucleotide sequence ID" value="NC_012522.1"/>
</dbReference>
<dbReference type="SMR" id="C1B058"/>
<dbReference type="STRING" id="632772.ROP_62320"/>
<dbReference type="KEGG" id="rop:ROP_62320"/>
<dbReference type="PATRIC" id="fig|632772.20.peg.6508"/>
<dbReference type="HOGENOM" id="CLU_016950_7_0_11"/>
<dbReference type="OrthoDB" id="9803322at2"/>
<dbReference type="Proteomes" id="UP000002212">
    <property type="component" value="Chromosome"/>
</dbReference>
<dbReference type="GO" id="GO:0005829">
    <property type="term" value="C:cytosol"/>
    <property type="evidence" value="ECO:0007669"/>
    <property type="project" value="TreeGrafter"/>
</dbReference>
<dbReference type="GO" id="GO:0000287">
    <property type="term" value="F:magnesium ion binding"/>
    <property type="evidence" value="ECO:0007669"/>
    <property type="project" value="UniProtKB-UniRule"/>
</dbReference>
<dbReference type="GO" id="GO:0008966">
    <property type="term" value="F:phosphoglucosamine mutase activity"/>
    <property type="evidence" value="ECO:0007669"/>
    <property type="project" value="UniProtKB-UniRule"/>
</dbReference>
<dbReference type="GO" id="GO:0004615">
    <property type="term" value="F:phosphomannomutase activity"/>
    <property type="evidence" value="ECO:0007669"/>
    <property type="project" value="TreeGrafter"/>
</dbReference>
<dbReference type="GO" id="GO:0005975">
    <property type="term" value="P:carbohydrate metabolic process"/>
    <property type="evidence" value="ECO:0007669"/>
    <property type="project" value="InterPro"/>
</dbReference>
<dbReference type="GO" id="GO:0009252">
    <property type="term" value="P:peptidoglycan biosynthetic process"/>
    <property type="evidence" value="ECO:0007669"/>
    <property type="project" value="TreeGrafter"/>
</dbReference>
<dbReference type="GO" id="GO:0006048">
    <property type="term" value="P:UDP-N-acetylglucosamine biosynthetic process"/>
    <property type="evidence" value="ECO:0007669"/>
    <property type="project" value="TreeGrafter"/>
</dbReference>
<dbReference type="CDD" id="cd05802">
    <property type="entry name" value="GlmM"/>
    <property type="match status" value="1"/>
</dbReference>
<dbReference type="FunFam" id="3.30.310.50:FF:000001">
    <property type="entry name" value="Phosphoglucosamine mutase"/>
    <property type="match status" value="1"/>
</dbReference>
<dbReference type="FunFam" id="3.40.120.10:FF:000001">
    <property type="entry name" value="Phosphoglucosamine mutase"/>
    <property type="match status" value="1"/>
</dbReference>
<dbReference type="FunFam" id="3.40.120.10:FF:000003">
    <property type="entry name" value="Phosphoglucosamine mutase"/>
    <property type="match status" value="1"/>
</dbReference>
<dbReference type="Gene3D" id="3.40.120.10">
    <property type="entry name" value="Alpha-D-Glucose-1,6-Bisphosphate, subunit A, domain 3"/>
    <property type="match status" value="3"/>
</dbReference>
<dbReference type="Gene3D" id="3.30.310.50">
    <property type="entry name" value="Alpha-D-phosphohexomutase, C-terminal domain"/>
    <property type="match status" value="1"/>
</dbReference>
<dbReference type="HAMAP" id="MF_01554_B">
    <property type="entry name" value="GlmM_B"/>
    <property type="match status" value="1"/>
</dbReference>
<dbReference type="InterPro" id="IPR005844">
    <property type="entry name" value="A-D-PHexomutase_a/b/a-I"/>
</dbReference>
<dbReference type="InterPro" id="IPR016055">
    <property type="entry name" value="A-D-PHexomutase_a/b/a-I/II/III"/>
</dbReference>
<dbReference type="InterPro" id="IPR005845">
    <property type="entry name" value="A-D-PHexomutase_a/b/a-II"/>
</dbReference>
<dbReference type="InterPro" id="IPR005846">
    <property type="entry name" value="A-D-PHexomutase_a/b/a-III"/>
</dbReference>
<dbReference type="InterPro" id="IPR005843">
    <property type="entry name" value="A-D-PHexomutase_C"/>
</dbReference>
<dbReference type="InterPro" id="IPR036900">
    <property type="entry name" value="A-D-PHexomutase_C_sf"/>
</dbReference>
<dbReference type="InterPro" id="IPR016066">
    <property type="entry name" value="A-D-PHexomutase_CS"/>
</dbReference>
<dbReference type="InterPro" id="IPR005841">
    <property type="entry name" value="Alpha-D-phosphohexomutase_SF"/>
</dbReference>
<dbReference type="InterPro" id="IPR006352">
    <property type="entry name" value="GlmM_bact"/>
</dbReference>
<dbReference type="InterPro" id="IPR050060">
    <property type="entry name" value="Phosphoglucosamine_mutase"/>
</dbReference>
<dbReference type="NCBIfam" id="TIGR01455">
    <property type="entry name" value="glmM"/>
    <property type="match status" value="1"/>
</dbReference>
<dbReference type="PANTHER" id="PTHR42946:SF1">
    <property type="entry name" value="PHOSPHOGLUCOMUTASE (ALPHA-D-GLUCOSE-1,6-BISPHOSPHATE-DEPENDENT)"/>
    <property type="match status" value="1"/>
</dbReference>
<dbReference type="PANTHER" id="PTHR42946">
    <property type="entry name" value="PHOSPHOHEXOSE MUTASE"/>
    <property type="match status" value="1"/>
</dbReference>
<dbReference type="Pfam" id="PF02878">
    <property type="entry name" value="PGM_PMM_I"/>
    <property type="match status" value="1"/>
</dbReference>
<dbReference type="Pfam" id="PF02879">
    <property type="entry name" value="PGM_PMM_II"/>
    <property type="match status" value="1"/>
</dbReference>
<dbReference type="Pfam" id="PF02880">
    <property type="entry name" value="PGM_PMM_III"/>
    <property type="match status" value="1"/>
</dbReference>
<dbReference type="Pfam" id="PF00408">
    <property type="entry name" value="PGM_PMM_IV"/>
    <property type="match status" value="1"/>
</dbReference>
<dbReference type="PRINTS" id="PR00509">
    <property type="entry name" value="PGMPMM"/>
</dbReference>
<dbReference type="SUPFAM" id="SSF55957">
    <property type="entry name" value="Phosphoglucomutase, C-terminal domain"/>
    <property type="match status" value="1"/>
</dbReference>
<dbReference type="SUPFAM" id="SSF53738">
    <property type="entry name" value="Phosphoglucomutase, first 3 domains"/>
    <property type="match status" value="3"/>
</dbReference>
<dbReference type="PROSITE" id="PS00710">
    <property type="entry name" value="PGM_PMM"/>
    <property type="match status" value="1"/>
</dbReference>
<sequence length="445" mass="45066">MGRLFGTDGVRGLANTELTAELALQVASAAATVLASPGSGGRKTAVVGRDPRASGEMLEAAVVAGLTSAGVDVLNVGVLPTPAVAFLTAELDAALGVMISASHNPMPDNGIKIFAAGGHKLDDEVEDRIESVATGTATRRAPTGAGIGRVHTVPDAADRYLQHLTTALPNRLDGLTVVVDCAHGAASDVAPAAYRAAGATVVAINAEPDGLNINENCGSTHLEGLQKAVVRHGADLGLAHDGDADRCLAVDAGGSLVDGDAIMTVLALGMRDAGELVDDTLVATVMSNLGLHIAMREAGISLVTTAVGDRYVLEGLRSGGFSLGGEQSGHVVFPAFGTTGDGVLTGLRLMGRMAETGQPIAELASAMTTLPQVLVNVKVADKRAVAASPVVLDAVLAAERSLGENGRVLLRPSGTEQLVRVMVEASDLEVARKLADELAGTVASV</sequence>
<reference key="1">
    <citation type="submission" date="2009-03" db="EMBL/GenBank/DDBJ databases">
        <title>Comparison of the complete genome sequences of Rhodococcus erythropolis PR4 and Rhodococcus opacus B4.</title>
        <authorList>
            <person name="Takarada H."/>
            <person name="Sekine M."/>
            <person name="Hosoyama A."/>
            <person name="Yamada R."/>
            <person name="Fujisawa T."/>
            <person name="Omata S."/>
            <person name="Shimizu A."/>
            <person name="Tsukatani N."/>
            <person name="Tanikawa S."/>
            <person name="Fujita N."/>
            <person name="Harayama S."/>
        </authorList>
    </citation>
    <scope>NUCLEOTIDE SEQUENCE [LARGE SCALE GENOMIC DNA]</scope>
    <source>
        <strain>B4</strain>
    </source>
</reference>
<gene>
    <name evidence="1" type="primary">glmM</name>
    <name type="ordered locus">ROP_62320</name>
</gene>
<proteinExistence type="inferred from homology"/>
<feature type="chain" id="PRO_1000185379" description="Phosphoglucosamine mutase">
    <location>
        <begin position="1"/>
        <end position="445"/>
    </location>
</feature>
<feature type="active site" description="Phosphoserine intermediate" evidence="1">
    <location>
        <position position="102"/>
    </location>
</feature>
<feature type="binding site" description="via phosphate group" evidence="1">
    <location>
        <position position="102"/>
    </location>
    <ligand>
        <name>Mg(2+)</name>
        <dbReference type="ChEBI" id="CHEBI:18420"/>
    </ligand>
</feature>
<feature type="binding site" evidence="1">
    <location>
        <position position="241"/>
    </location>
    <ligand>
        <name>Mg(2+)</name>
        <dbReference type="ChEBI" id="CHEBI:18420"/>
    </ligand>
</feature>
<feature type="binding site" evidence="1">
    <location>
        <position position="243"/>
    </location>
    <ligand>
        <name>Mg(2+)</name>
        <dbReference type="ChEBI" id="CHEBI:18420"/>
    </ligand>
</feature>
<feature type="binding site" evidence="1">
    <location>
        <position position="245"/>
    </location>
    <ligand>
        <name>Mg(2+)</name>
        <dbReference type="ChEBI" id="CHEBI:18420"/>
    </ligand>
</feature>
<feature type="modified residue" description="Phosphoserine" evidence="1">
    <location>
        <position position="102"/>
    </location>
</feature>
<name>GLMM_RHOOB</name>
<organism>
    <name type="scientific">Rhodococcus opacus (strain B4)</name>
    <dbReference type="NCBI Taxonomy" id="632772"/>
    <lineage>
        <taxon>Bacteria</taxon>
        <taxon>Bacillati</taxon>
        <taxon>Actinomycetota</taxon>
        <taxon>Actinomycetes</taxon>
        <taxon>Mycobacteriales</taxon>
        <taxon>Nocardiaceae</taxon>
        <taxon>Rhodococcus</taxon>
    </lineage>
</organism>
<protein>
    <recommendedName>
        <fullName evidence="1">Phosphoglucosamine mutase</fullName>
        <ecNumber evidence="1">5.4.2.10</ecNumber>
    </recommendedName>
</protein>